<comment type="function">
    <text evidence="1">Catalyzes the synthesis of GMP from XMP.</text>
</comment>
<comment type="catalytic activity">
    <reaction>
        <text>XMP + L-glutamine + ATP + H2O = GMP + L-glutamate + AMP + diphosphate + 2 H(+)</text>
        <dbReference type="Rhea" id="RHEA:11680"/>
        <dbReference type="ChEBI" id="CHEBI:15377"/>
        <dbReference type="ChEBI" id="CHEBI:15378"/>
        <dbReference type="ChEBI" id="CHEBI:29985"/>
        <dbReference type="ChEBI" id="CHEBI:30616"/>
        <dbReference type="ChEBI" id="CHEBI:33019"/>
        <dbReference type="ChEBI" id="CHEBI:57464"/>
        <dbReference type="ChEBI" id="CHEBI:58115"/>
        <dbReference type="ChEBI" id="CHEBI:58359"/>
        <dbReference type="ChEBI" id="CHEBI:456215"/>
        <dbReference type="EC" id="6.3.5.2"/>
    </reaction>
</comment>
<comment type="pathway">
    <text>Purine metabolism; GMP biosynthesis; GMP from XMP (L-Gln route): step 1/1.</text>
</comment>
<comment type="subunit">
    <text evidence="1">Homodimer.</text>
</comment>
<protein>
    <recommendedName>
        <fullName>GMP synthase [glutamine-hydrolyzing]</fullName>
        <ecNumber>6.3.5.2</ecNumber>
    </recommendedName>
    <alternativeName>
        <fullName>GMP synthetase</fullName>
    </alternativeName>
    <alternativeName>
        <fullName>Glutamine amidotransferase</fullName>
    </alternativeName>
</protein>
<proteinExistence type="inferred from homology"/>
<keyword id="KW-0067">ATP-binding</keyword>
<keyword id="KW-0315">Glutamine amidotransferase</keyword>
<keyword id="KW-0332">GMP biosynthesis</keyword>
<keyword id="KW-0436">Ligase</keyword>
<keyword id="KW-0547">Nucleotide-binding</keyword>
<keyword id="KW-0658">Purine biosynthesis</keyword>
<keyword id="KW-1185">Reference proteome</keyword>
<accession>Q9X2E0</accession>
<reference key="1">
    <citation type="journal article" date="1999" name="Nature">
        <title>Evidence for lateral gene transfer between Archaea and Bacteria from genome sequence of Thermotoga maritima.</title>
        <authorList>
            <person name="Nelson K.E."/>
            <person name="Clayton R.A."/>
            <person name="Gill S.R."/>
            <person name="Gwinn M.L."/>
            <person name="Dodson R.J."/>
            <person name="Haft D.H."/>
            <person name="Hickey E.K."/>
            <person name="Peterson J.D."/>
            <person name="Nelson W.C."/>
            <person name="Ketchum K.A."/>
            <person name="McDonald L.A."/>
            <person name="Utterback T.R."/>
            <person name="Malek J.A."/>
            <person name="Linher K.D."/>
            <person name="Garrett M.M."/>
            <person name="Stewart A.M."/>
            <person name="Cotton M.D."/>
            <person name="Pratt M.S."/>
            <person name="Phillips C.A."/>
            <person name="Richardson D.L."/>
            <person name="Heidelberg J.F."/>
            <person name="Sutton G.G."/>
            <person name="Fleischmann R.D."/>
            <person name="Eisen J.A."/>
            <person name="White O."/>
            <person name="Salzberg S.L."/>
            <person name="Smith H.O."/>
            <person name="Venter J.C."/>
            <person name="Fraser C.M."/>
        </authorList>
    </citation>
    <scope>NUCLEOTIDE SEQUENCE [LARGE SCALE GENOMIC DNA]</scope>
    <source>
        <strain>ATCC 43589 / DSM 3109 / JCM 10099 / NBRC 100826 / MSB8</strain>
    </source>
</reference>
<evidence type="ECO:0000250" key="1"/>
<feature type="chain" id="PRO_0000140197" description="GMP synthase [glutamine-hydrolyzing]">
    <location>
        <begin position="1"/>
        <end position="501"/>
    </location>
</feature>
<feature type="domain" description="Glutamine amidotransferase type-1">
    <location>
        <begin position="1"/>
        <end position="185"/>
    </location>
</feature>
<feature type="domain" description="GMPS ATP-PPase">
    <location>
        <begin position="186"/>
        <end position="376"/>
    </location>
</feature>
<feature type="active site" description="Nucleophile" evidence="1">
    <location>
        <position position="75"/>
    </location>
</feature>
<feature type="active site" evidence="1">
    <location>
        <position position="159"/>
    </location>
</feature>
<feature type="active site" evidence="1">
    <location>
        <position position="161"/>
    </location>
</feature>
<feature type="binding site" evidence="1">
    <location>
        <begin position="213"/>
        <end position="219"/>
    </location>
    <ligand>
        <name>ATP</name>
        <dbReference type="ChEBI" id="CHEBI:30616"/>
    </ligand>
</feature>
<organism>
    <name type="scientific">Thermotoga maritima (strain ATCC 43589 / DSM 3109 / JCM 10099 / NBRC 100826 / MSB8)</name>
    <dbReference type="NCBI Taxonomy" id="243274"/>
    <lineage>
        <taxon>Bacteria</taxon>
        <taxon>Thermotogati</taxon>
        <taxon>Thermotogota</taxon>
        <taxon>Thermotogae</taxon>
        <taxon>Thermotogales</taxon>
        <taxon>Thermotogaceae</taxon>
        <taxon>Thermotoga</taxon>
    </lineage>
</organism>
<name>GUAA_THEMA</name>
<gene>
    <name type="primary">guaA</name>
    <name type="ordered locus">TM_1820</name>
</gene>
<dbReference type="EC" id="6.3.5.2"/>
<dbReference type="EMBL" id="AE000512">
    <property type="protein sequence ID" value="AAD36883.1"/>
    <property type="molecule type" value="Genomic_DNA"/>
</dbReference>
<dbReference type="PIR" id="G72206">
    <property type="entry name" value="G72206"/>
</dbReference>
<dbReference type="RefSeq" id="NP_229617.1">
    <property type="nucleotide sequence ID" value="NC_000853.1"/>
</dbReference>
<dbReference type="RefSeq" id="WP_004082366.1">
    <property type="nucleotide sequence ID" value="NZ_CP011107.1"/>
</dbReference>
<dbReference type="SMR" id="Q9X2E0"/>
<dbReference type="FunCoup" id="Q9X2E0">
    <property type="interactions" value="423"/>
</dbReference>
<dbReference type="STRING" id="243274.TM_1820"/>
<dbReference type="MEROPS" id="C26.957"/>
<dbReference type="PaxDb" id="243274-THEMA_05095"/>
<dbReference type="EnsemblBacteria" id="AAD36883">
    <property type="protein sequence ID" value="AAD36883"/>
    <property type="gene ID" value="TM_1820"/>
</dbReference>
<dbReference type="KEGG" id="tma:TM1820"/>
<dbReference type="KEGG" id="tmi:THEMA_05095"/>
<dbReference type="KEGG" id="tmm:Tmari_1830"/>
<dbReference type="KEGG" id="tmw:THMA_1865"/>
<dbReference type="eggNOG" id="COG0518">
    <property type="taxonomic scope" value="Bacteria"/>
</dbReference>
<dbReference type="eggNOG" id="COG0519">
    <property type="taxonomic scope" value="Bacteria"/>
</dbReference>
<dbReference type="InParanoid" id="Q9X2E0"/>
<dbReference type="OrthoDB" id="9802219at2"/>
<dbReference type="UniPathway" id="UPA00189">
    <property type="reaction ID" value="UER00296"/>
</dbReference>
<dbReference type="Proteomes" id="UP000008183">
    <property type="component" value="Chromosome"/>
</dbReference>
<dbReference type="GO" id="GO:0005829">
    <property type="term" value="C:cytosol"/>
    <property type="evidence" value="ECO:0000318"/>
    <property type="project" value="GO_Central"/>
</dbReference>
<dbReference type="GO" id="GO:0005524">
    <property type="term" value="F:ATP binding"/>
    <property type="evidence" value="ECO:0007669"/>
    <property type="project" value="UniProtKB-UniRule"/>
</dbReference>
<dbReference type="GO" id="GO:0003921">
    <property type="term" value="F:GMP synthase activity"/>
    <property type="evidence" value="ECO:0000318"/>
    <property type="project" value="GO_Central"/>
</dbReference>
<dbReference type="GO" id="GO:0006177">
    <property type="term" value="P:GMP biosynthetic process"/>
    <property type="evidence" value="ECO:0000318"/>
    <property type="project" value="GO_Central"/>
</dbReference>
<dbReference type="CDD" id="cd01742">
    <property type="entry name" value="GATase1_GMP_Synthase"/>
    <property type="match status" value="1"/>
</dbReference>
<dbReference type="CDD" id="cd01997">
    <property type="entry name" value="GMP_synthase_C"/>
    <property type="match status" value="1"/>
</dbReference>
<dbReference type="FunFam" id="3.30.300.10:FF:000002">
    <property type="entry name" value="GMP synthase [glutamine-hydrolyzing]"/>
    <property type="match status" value="1"/>
</dbReference>
<dbReference type="FunFam" id="3.40.50.620:FF:000001">
    <property type="entry name" value="GMP synthase [glutamine-hydrolyzing]"/>
    <property type="match status" value="1"/>
</dbReference>
<dbReference type="FunFam" id="3.40.50.880:FF:000001">
    <property type="entry name" value="GMP synthase [glutamine-hydrolyzing]"/>
    <property type="match status" value="1"/>
</dbReference>
<dbReference type="Gene3D" id="3.30.300.10">
    <property type="match status" value="1"/>
</dbReference>
<dbReference type="Gene3D" id="3.40.50.880">
    <property type="match status" value="1"/>
</dbReference>
<dbReference type="Gene3D" id="3.40.50.620">
    <property type="entry name" value="HUPs"/>
    <property type="match status" value="1"/>
</dbReference>
<dbReference type="HAMAP" id="MF_00344">
    <property type="entry name" value="GMP_synthase"/>
    <property type="match status" value="1"/>
</dbReference>
<dbReference type="InterPro" id="IPR048267">
    <property type="entry name" value="Arginosuc_syn_N"/>
</dbReference>
<dbReference type="InterPro" id="IPR029062">
    <property type="entry name" value="Class_I_gatase-like"/>
</dbReference>
<dbReference type="InterPro" id="IPR017926">
    <property type="entry name" value="GATASE"/>
</dbReference>
<dbReference type="InterPro" id="IPR001674">
    <property type="entry name" value="GMP_synth_C"/>
</dbReference>
<dbReference type="InterPro" id="IPR004739">
    <property type="entry name" value="GMP_synth_GATase"/>
</dbReference>
<dbReference type="InterPro" id="IPR022955">
    <property type="entry name" value="GMP_synthase"/>
</dbReference>
<dbReference type="InterPro" id="IPR025777">
    <property type="entry name" value="GMPS_ATP_PPase_dom"/>
</dbReference>
<dbReference type="InterPro" id="IPR014729">
    <property type="entry name" value="Rossmann-like_a/b/a_fold"/>
</dbReference>
<dbReference type="NCBIfam" id="TIGR00884">
    <property type="entry name" value="guaA_Cterm"/>
    <property type="match status" value="1"/>
</dbReference>
<dbReference type="NCBIfam" id="TIGR00888">
    <property type="entry name" value="guaA_Nterm"/>
    <property type="match status" value="1"/>
</dbReference>
<dbReference type="NCBIfam" id="NF000848">
    <property type="entry name" value="PRK00074.1"/>
    <property type="match status" value="1"/>
</dbReference>
<dbReference type="PANTHER" id="PTHR11922:SF2">
    <property type="entry name" value="GMP SYNTHASE [GLUTAMINE-HYDROLYZING]"/>
    <property type="match status" value="1"/>
</dbReference>
<dbReference type="PANTHER" id="PTHR11922">
    <property type="entry name" value="GMP SYNTHASE-RELATED"/>
    <property type="match status" value="1"/>
</dbReference>
<dbReference type="Pfam" id="PF00764">
    <property type="entry name" value="Arginosuc_synth"/>
    <property type="match status" value="1"/>
</dbReference>
<dbReference type="Pfam" id="PF00117">
    <property type="entry name" value="GATase"/>
    <property type="match status" value="1"/>
</dbReference>
<dbReference type="Pfam" id="PF00958">
    <property type="entry name" value="GMP_synt_C"/>
    <property type="match status" value="1"/>
</dbReference>
<dbReference type="PRINTS" id="PR00096">
    <property type="entry name" value="GATASE"/>
</dbReference>
<dbReference type="SUPFAM" id="SSF52402">
    <property type="entry name" value="Adenine nucleotide alpha hydrolases-like"/>
    <property type="match status" value="1"/>
</dbReference>
<dbReference type="SUPFAM" id="SSF52317">
    <property type="entry name" value="Class I glutamine amidotransferase-like"/>
    <property type="match status" value="1"/>
</dbReference>
<dbReference type="SUPFAM" id="SSF54810">
    <property type="entry name" value="GMP synthetase C-terminal dimerisation domain"/>
    <property type="match status" value="1"/>
</dbReference>
<dbReference type="PROSITE" id="PS51273">
    <property type="entry name" value="GATASE_TYPE_1"/>
    <property type="match status" value="1"/>
</dbReference>
<dbReference type="PROSITE" id="PS51553">
    <property type="entry name" value="GMPS_ATP_PPASE"/>
    <property type="match status" value="1"/>
</dbReference>
<sequence length="501" mass="57040">MVLVVDYGSQYSRLITRRIRENEVYSEVVFPDDKVDLSKVDAVILSGGPRSVYEEDAPKLPEWFQEYKGPVLAICYGMQLIVKELGGEVRRGRGEYGRTLVELSRDPIFEGIPEKVHVWMSHGDEVVRLPEGFHPIAVSETGVIAAATDGKRFWLLQFHPEVHHTEYGDRMISNFLFNVCKLEKNWKIGDLVEEKIRHIKETIGNKKAILALSGGVDSSVAAVLVHRAIGKNLVCVFVDHGLLRKNEREEVERVFKEHFDMNLVVVDARKRFLEKLRGVTDPEKKRKIIGEEFIRVFEEEAKKHDVEFLVQGTIYSDVIESAASGKTTAKIKSHHNVGGLPEKMNLKLVEPLRDLFKDEVRKVGKYLGIPDRIINRHPFPGPGLAVRVLGEVTEEKLEILREADYIFIETLRKHDYYDKVWQAFAVLLPIKSVGVKGDARAYEYVVALRAVNSVEGMTADWSRIPHDILDEAARRITREVKGVGRVVYDITSKPPATIEWE</sequence>